<feature type="chain" id="PRO_0000183894" description="Cytochrome bo(3) ubiquinol oxidase subunit 3">
    <location>
        <begin position="1"/>
        <end position="204"/>
    </location>
</feature>
<feature type="topological domain" description="Cytoplasmic" evidence="2">
    <location>
        <begin position="1"/>
        <end position="31"/>
    </location>
</feature>
<feature type="transmembrane region" description="Helical" evidence="2">
    <location>
        <begin position="32"/>
        <end position="50"/>
    </location>
</feature>
<feature type="topological domain" description="Periplasmic" evidence="2">
    <location>
        <begin position="51"/>
        <end position="66"/>
    </location>
</feature>
<feature type="transmembrane region" description="Helical" evidence="2">
    <location>
        <begin position="67"/>
        <end position="85"/>
    </location>
</feature>
<feature type="topological domain" description="Cytoplasmic" evidence="2">
    <location>
        <begin position="86"/>
        <end position="101"/>
    </location>
</feature>
<feature type="transmembrane region" description="Helical" evidence="2">
    <location>
        <begin position="102"/>
        <end position="120"/>
    </location>
</feature>
<feature type="topological domain" description="Periplasmic" evidence="2">
    <location>
        <begin position="121"/>
        <end position="142"/>
    </location>
</feature>
<feature type="transmembrane region" description="Helical" evidence="2">
    <location>
        <begin position="143"/>
        <end position="161"/>
    </location>
</feature>
<feature type="topological domain" description="Cytoplasmic" evidence="2">
    <location>
        <begin position="162"/>
        <end position="184"/>
    </location>
</feature>
<feature type="transmembrane region" description="Helical" evidence="2">
    <location>
        <begin position="185"/>
        <end position="203"/>
    </location>
</feature>
<feature type="topological domain" description="Periplasmic" evidence="2">
    <location>
        <position position="204"/>
    </location>
</feature>
<gene>
    <name type="primary">cyoC</name>
    <name type="ordered locus">c0541</name>
</gene>
<reference key="1">
    <citation type="journal article" date="2002" name="Proc. Natl. Acad. Sci. U.S.A.">
        <title>Extensive mosaic structure revealed by the complete genome sequence of uropathogenic Escherichia coli.</title>
        <authorList>
            <person name="Welch R.A."/>
            <person name="Burland V."/>
            <person name="Plunkett G. III"/>
            <person name="Redford P."/>
            <person name="Roesch P."/>
            <person name="Rasko D."/>
            <person name="Buckles E.L."/>
            <person name="Liou S.-R."/>
            <person name="Boutin A."/>
            <person name="Hackett J."/>
            <person name="Stroud D."/>
            <person name="Mayhew G.F."/>
            <person name="Rose D.J."/>
            <person name="Zhou S."/>
            <person name="Schwartz D.C."/>
            <person name="Perna N.T."/>
            <person name="Mobley H.L.T."/>
            <person name="Donnenberg M.S."/>
            <person name="Blattner F.R."/>
        </authorList>
    </citation>
    <scope>NUCLEOTIDE SEQUENCE [LARGE SCALE GENOMIC DNA]</scope>
    <source>
        <strain>CFT073 / ATCC 700928 / UPEC</strain>
    </source>
</reference>
<sequence>MATDTLTHATAHAHEHGHHDAGGTKIFGFWIYLMSDCILFSILFATYAVLVNGTAGGPTGKDIFELPFVLVETFLLLFSSITYGMAAIAMYKNNKSQVISWLALTWLFGAGFIGMEIYEFHHLIVNGMGPDRSGFLSAFFALVGTHGLHVTSGLIWMAVLMVQIARRGLTSTNRTRIMCLSLFWHFLDVVWICVFTVVYLMGAM</sequence>
<proteinExistence type="inferred from homology"/>
<dbReference type="EMBL" id="AE014075">
    <property type="protein sequence ID" value="AAN79019.1"/>
    <property type="molecule type" value="Genomic_DNA"/>
</dbReference>
<dbReference type="RefSeq" id="WP_000179819.1">
    <property type="nucleotide sequence ID" value="NZ_CP051263.1"/>
</dbReference>
<dbReference type="SMR" id="P0ABJ4"/>
<dbReference type="STRING" id="199310.c0541"/>
<dbReference type="KEGG" id="ecc:c0541"/>
<dbReference type="eggNOG" id="COG1845">
    <property type="taxonomic scope" value="Bacteria"/>
</dbReference>
<dbReference type="HOGENOM" id="CLU_044071_3_0_6"/>
<dbReference type="BioCyc" id="ECOL199310:C0541-MONOMER"/>
<dbReference type="Proteomes" id="UP000001410">
    <property type="component" value="Chromosome"/>
</dbReference>
<dbReference type="GO" id="GO:0005886">
    <property type="term" value="C:plasma membrane"/>
    <property type="evidence" value="ECO:0007669"/>
    <property type="project" value="UniProtKB-SubCell"/>
</dbReference>
<dbReference type="GO" id="GO:0009486">
    <property type="term" value="F:cytochrome bo3 ubiquinol oxidase activity"/>
    <property type="evidence" value="ECO:0007669"/>
    <property type="project" value="InterPro"/>
</dbReference>
<dbReference type="GO" id="GO:0004129">
    <property type="term" value="F:cytochrome-c oxidase activity"/>
    <property type="evidence" value="ECO:0007669"/>
    <property type="project" value="InterPro"/>
</dbReference>
<dbReference type="GO" id="GO:0019646">
    <property type="term" value="P:aerobic electron transport chain"/>
    <property type="evidence" value="ECO:0007669"/>
    <property type="project" value="InterPro"/>
</dbReference>
<dbReference type="CDD" id="cd02863">
    <property type="entry name" value="Ubiquinol_oxidase_III"/>
    <property type="match status" value="1"/>
</dbReference>
<dbReference type="FunFam" id="1.20.120.80:FF:000001">
    <property type="entry name" value="Cytochrome (Ubi)quinol oxidase subunit III"/>
    <property type="match status" value="1"/>
</dbReference>
<dbReference type="Gene3D" id="1.20.120.80">
    <property type="entry name" value="Cytochrome c oxidase, subunit III, four-helix bundle"/>
    <property type="match status" value="1"/>
</dbReference>
<dbReference type="InterPro" id="IPR024791">
    <property type="entry name" value="Cyt_c/ubiquinol_Oxase_su3"/>
</dbReference>
<dbReference type="InterPro" id="IPR000298">
    <property type="entry name" value="Cyt_c_oxidase-like_su3"/>
</dbReference>
<dbReference type="InterPro" id="IPR035973">
    <property type="entry name" value="Cyt_c_oxidase_su3-like_sf"/>
</dbReference>
<dbReference type="InterPro" id="IPR013833">
    <property type="entry name" value="Cyt_c_oxidase_su3_a-hlx"/>
</dbReference>
<dbReference type="InterPro" id="IPR014206">
    <property type="entry name" value="Cyt_c_ubiqinol_oxidase_su3"/>
</dbReference>
<dbReference type="InterPro" id="IPR033946">
    <property type="entry name" value="Ubiquinol_oxase_su3_dom"/>
</dbReference>
<dbReference type="NCBIfam" id="TIGR02842">
    <property type="entry name" value="CyoC"/>
    <property type="match status" value="1"/>
</dbReference>
<dbReference type="NCBIfam" id="NF007944">
    <property type="entry name" value="PRK10663.1"/>
    <property type="match status" value="1"/>
</dbReference>
<dbReference type="PANTHER" id="PTHR11403:SF2">
    <property type="entry name" value="CYTOCHROME BO(3) UBIQUINOL OXIDASE SUBUNIT 3"/>
    <property type="match status" value="1"/>
</dbReference>
<dbReference type="PANTHER" id="PTHR11403">
    <property type="entry name" value="CYTOCHROME C OXIDASE SUBUNIT III"/>
    <property type="match status" value="1"/>
</dbReference>
<dbReference type="Pfam" id="PF00510">
    <property type="entry name" value="COX3"/>
    <property type="match status" value="1"/>
</dbReference>
<dbReference type="SUPFAM" id="SSF81452">
    <property type="entry name" value="Cytochrome c oxidase subunit III-like"/>
    <property type="match status" value="1"/>
</dbReference>
<dbReference type="PROSITE" id="PS50253">
    <property type="entry name" value="COX3"/>
    <property type="match status" value="1"/>
</dbReference>
<organism>
    <name type="scientific">Escherichia coli O6:H1 (strain CFT073 / ATCC 700928 / UPEC)</name>
    <dbReference type="NCBI Taxonomy" id="199310"/>
    <lineage>
        <taxon>Bacteria</taxon>
        <taxon>Pseudomonadati</taxon>
        <taxon>Pseudomonadota</taxon>
        <taxon>Gammaproteobacteria</taxon>
        <taxon>Enterobacterales</taxon>
        <taxon>Enterobacteriaceae</taxon>
        <taxon>Escherichia</taxon>
    </lineage>
</organism>
<protein>
    <recommendedName>
        <fullName>Cytochrome bo(3) ubiquinol oxidase subunit 3</fullName>
    </recommendedName>
    <alternativeName>
        <fullName>Cytochrome o ubiquinol oxidase subunit 3</fullName>
        <shortName>Cytochrome o subunit 3</shortName>
    </alternativeName>
    <alternativeName>
        <fullName>Oxidase bo(3) subunit 3</fullName>
    </alternativeName>
    <alternativeName>
        <fullName>Ubiquinol oxidase chain C</fullName>
    </alternativeName>
    <alternativeName>
        <fullName>Ubiquinol oxidase polypeptide III</fullName>
    </alternativeName>
    <alternativeName>
        <fullName>Ubiquinol oxidase subunit 3</fullName>
    </alternativeName>
</protein>
<evidence type="ECO:0000250" key="1"/>
<evidence type="ECO:0000305" key="2"/>
<accession>P0ABJ4</accession>
<accession>P18402</accession>
<keyword id="KW-0997">Cell inner membrane</keyword>
<keyword id="KW-1003">Cell membrane</keyword>
<keyword id="KW-0249">Electron transport</keyword>
<keyword id="KW-0472">Membrane</keyword>
<keyword id="KW-0560">Oxidoreductase</keyword>
<keyword id="KW-1185">Reference proteome</keyword>
<keyword id="KW-0812">Transmembrane</keyword>
<keyword id="KW-1133">Transmembrane helix</keyword>
<keyword id="KW-0813">Transport</keyword>
<name>CYOC_ECOL6</name>
<comment type="function">
    <text evidence="1">Cytochrome bo(3) ubiquinol terminal oxidase is the component of the aerobic respiratory chain of E.coli that predominates when cells are grown at high aeration. Has proton pump activity across the membrane in addition to electron transfer, pumping 2 protons/electron (By similarity).</text>
</comment>
<comment type="subunit">
    <text evidence="1">Heterooctamer of two A chains, two B chains, two C chains and two D chains.</text>
</comment>
<comment type="subcellular location">
    <subcellularLocation>
        <location evidence="1">Cell inner membrane</location>
        <topology evidence="1">Multi-pass membrane protein</topology>
    </subcellularLocation>
</comment>
<comment type="similarity">
    <text evidence="2">Belongs to the cytochrome c oxidase subunit 3 family.</text>
</comment>